<feature type="chain" id="PRO_1000204946" description="Chorismate synthase">
    <location>
        <begin position="1"/>
        <end position="350"/>
    </location>
</feature>
<feature type="binding site" evidence="1">
    <location>
        <position position="48"/>
    </location>
    <ligand>
        <name>NADP(+)</name>
        <dbReference type="ChEBI" id="CHEBI:58349"/>
    </ligand>
</feature>
<feature type="binding site" evidence="1">
    <location>
        <begin position="125"/>
        <end position="127"/>
    </location>
    <ligand>
        <name>FMN</name>
        <dbReference type="ChEBI" id="CHEBI:58210"/>
    </ligand>
</feature>
<feature type="binding site" evidence="1">
    <location>
        <position position="277"/>
    </location>
    <ligand>
        <name>FMN</name>
        <dbReference type="ChEBI" id="CHEBI:58210"/>
    </ligand>
</feature>
<feature type="binding site" evidence="1">
    <location>
        <begin position="292"/>
        <end position="296"/>
    </location>
    <ligand>
        <name>FMN</name>
        <dbReference type="ChEBI" id="CHEBI:58210"/>
    </ligand>
</feature>
<feature type="binding site" evidence="1">
    <location>
        <position position="318"/>
    </location>
    <ligand>
        <name>FMN</name>
        <dbReference type="ChEBI" id="CHEBI:58210"/>
    </ligand>
</feature>
<proteinExistence type="inferred from homology"/>
<organism>
    <name type="scientific">Maridesulfovibrio salexigens (strain ATCC 14822 / DSM 2638 / NCIMB 8403 / VKM B-1763)</name>
    <name type="common">Desulfovibrio salexigens</name>
    <dbReference type="NCBI Taxonomy" id="526222"/>
    <lineage>
        <taxon>Bacteria</taxon>
        <taxon>Pseudomonadati</taxon>
        <taxon>Thermodesulfobacteriota</taxon>
        <taxon>Desulfovibrionia</taxon>
        <taxon>Desulfovibrionales</taxon>
        <taxon>Desulfovibrionaceae</taxon>
        <taxon>Maridesulfovibrio</taxon>
    </lineage>
</organism>
<accession>C6C0I6</accession>
<comment type="function">
    <text evidence="1">Catalyzes the anti-1,4-elimination of the C-3 phosphate and the C-6 proR hydrogen from 5-enolpyruvylshikimate-3-phosphate (EPSP) to yield chorismate, which is the branch point compound that serves as the starting substrate for the three terminal pathways of aromatic amino acid biosynthesis. This reaction introduces a second double bond into the aromatic ring system.</text>
</comment>
<comment type="catalytic activity">
    <reaction evidence="1">
        <text>5-O-(1-carboxyvinyl)-3-phosphoshikimate = chorismate + phosphate</text>
        <dbReference type="Rhea" id="RHEA:21020"/>
        <dbReference type="ChEBI" id="CHEBI:29748"/>
        <dbReference type="ChEBI" id="CHEBI:43474"/>
        <dbReference type="ChEBI" id="CHEBI:57701"/>
        <dbReference type="EC" id="4.2.3.5"/>
    </reaction>
</comment>
<comment type="cofactor">
    <cofactor evidence="1">
        <name>FMNH2</name>
        <dbReference type="ChEBI" id="CHEBI:57618"/>
    </cofactor>
    <text evidence="1">Reduced FMN (FMNH(2)).</text>
</comment>
<comment type="pathway">
    <text evidence="1">Metabolic intermediate biosynthesis; chorismate biosynthesis; chorismate from D-erythrose 4-phosphate and phosphoenolpyruvate: step 7/7.</text>
</comment>
<comment type="subunit">
    <text evidence="1">Homotetramer.</text>
</comment>
<comment type="similarity">
    <text evidence="1">Belongs to the chorismate synthase family.</text>
</comment>
<evidence type="ECO:0000255" key="1">
    <source>
        <dbReference type="HAMAP-Rule" id="MF_00300"/>
    </source>
</evidence>
<protein>
    <recommendedName>
        <fullName evidence="1">Chorismate synthase</fullName>
        <shortName evidence="1">CS</shortName>
        <ecNumber evidence="1">4.2.3.5</ecNumber>
    </recommendedName>
    <alternativeName>
        <fullName evidence="1">5-enolpyruvylshikimate-3-phosphate phospholyase</fullName>
    </alternativeName>
</protein>
<gene>
    <name evidence="1" type="primary">aroC</name>
    <name type="ordered locus">Desal_1056</name>
</gene>
<name>AROC_MARSD</name>
<dbReference type="EC" id="4.2.3.5" evidence="1"/>
<dbReference type="EMBL" id="CP001649">
    <property type="protein sequence ID" value="ACS79120.1"/>
    <property type="molecule type" value="Genomic_DNA"/>
</dbReference>
<dbReference type="RefSeq" id="WP_015850939.1">
    <property type="nucleotide sequence ID" value="NC_012881.1"/>
</dbReference>
<dbReference type="SMR" id="C6C0I6"/>
<dbReference type="STRING" id="526222.Desal_1056"/>
<dbReference type="KEGG" id="dsa:Desal_1056"/>
<dbReference type="eggNOG" id="COG0082">
    <property type="taxonomic scope" value="Bacteria"/>
</dbReference>
<dbReference type="HOGENOM" id="CLU_034547_0_2_7"/>
<dbReference type="OrthoDB" id="9771806at2"/>
<dbReference type="UniPathway" id="UPA00053">
    <property type="reaction ID" value="UER00090"/>
</dbReference>
<dbReference type="Proteomes" id="UP000002601">
    <property type="component" value="Chromosome"/>
</dbReference>
<dbReference type="GO" id="GO:0005829">
    <property type="term" value="C:cytosol"/>
    <property type="evidence" value="ECO:0007669"/>
    <property type="project" value="TreeGrafter"/>
</dbReference>
<dbReference type="GO" id="GO:0004107">
    <property type="term" value="F:chorismate synthase activity"/>
    <property type="evidence" value="ECO:0007669"/>
    <property type="project" value="UniProtKB-UniRule"/>
</dbReference>
<dbReference type="GO" id="GO:0010181">
    <property type="term" value="F:FMN binding"/>
    <property type="evidence" value="ECO:0007669"/>
    <property type="project" value="TreeGrafter"/>
</dbReference>
<dbReference type="GO" id="GO:0008652">
    <property type="term" value="P:amino acid biosynthetic process"/>
    <property type="evidence" value="ECO:0007669"/>
    <property type="project" value="UniProtKB-KW"/>
</dbReference>
<dbReference type="GO" id="GO:0009073">
    <property type="term" value="P:aromatic amino acid family biosynthetic process"/>
    <property type="evidence" value="ECO:0007669"/>
    <property type="project" value="UniProtKB-KW"/>
</dbReference>
<dbReference type="GO" id="GO:0009423">
    <property type="term" value="P:chorismate biosynthetic process"/>
    <property type="evidence" value="ECO:0007669"/>
    <property type="project" value="UniProtKB-UniRule"/>
</dbReference>
<dbReference type="CDD" id="cd07304">
    <property type="entry name" value="Chorismate_synthase"/>
    <property type="match status" value="1"/>
</dbReference>
<dbReference type="Gene3D" id="3.60.150.10">
    <property type="entry name" value="Chorismate synthase AroC"/>
    <property type="match status" value="1"/>
</dbReference>
<dbReference type="HAMAP" id="MF_00300">
    <property type="entry name" value="Chorismate_synth"/>
    <property type="match status" value="1"/>
</dbReference>
<dbReference type="InterPro" id="IPR000453">
    <property type="entry name" value="Chorismate_synth"/>
</dbReference>
<dbReference type="InterPro" id="IPR035904">
    <property type="entry name" value="Chorismate_synth_AroC_sf"/>
</dbReference>
<dbReference type="InterPro" id="IPR020541">
    <property type="entry name" value="Chorismate_synthase_CS"/>
</dbReference>
<dbReference type="NCBIfam" id="TIGR00033">
    <property type="entry name" value="aroC"/>
    <property type="match status" value="1"/>
</dbReference>
<dbReference type="NCBIfam" id="NF003793">
    <property type="entry name" value="PRK05382.1"/>
    <property type="match status" value="1"/>
</dbReference>
<dbReference type="PANTHER" id="PTHR21085">
    <property type="entry name" value="CHORISMATE SYNTHASE"/>
    <property type="match status" value="1"/>
</dbReference>
<dbReference type="PANTHER" id="PTHR21085:SF0">
    <property type="entry name" value="CHORISMATE SYNTHASE"/>
    <property type="match status" value="1"/>
</dbReference>
<dbReference type="Pfam" id="PF01264">
    <property type="entry name" value="Chorismate_synt"/>
    <property type="match status" value="1"/>
</dbReference>
<dbReference type="PIRSF" id="PIRSF001456">
    <property type="entry name" value="Chorismate_synth"/>
    <property type="match status" value="1"/>
</dbReference>
<dbReference type="SUPFAM" id="SSF103263">
    <property type="entry name" value="Chorismate synthase, AroC"/>
    <property type="match status" value="1"/>
</dbReference>
<dbReference type="PROSITE" id="PS00787">
    <property type="entry name" value="CHORISMATE_SYNTHASE_1"/>
    <property type="match status" value="1"/>
</dbReference>
<dbReference type="PROSITE" id="PS00788">
    <property type="entry name" value="CHORISMATE_SYNTHASE_2"/>
    <property type="match status" value="1"/>
</dbReference>
<keyword id="KW-0028">Amino-acid biosynthesis</keyword>
<keyword id="KW-0057">Aromatic amino acid biosynthesis</keyword>
<keyword id="KW-0274">FAD</keyword>
<keyword id="KW-0285">Flavoprotein</keyword>
<keyword id="KW-0288">FMN</keyword>
<keyword id="KW-0456">Lyase</keyword>
<keyword id="KW-0521">NADP</keyword>
<keyword id="KW-1185">Reference proteome</keyword>
<reference key="1">
    <citation type="submission" date="2009-06" db="EMBL/GenBank/DDBJ databases">
        <title>Complete sequence of Desulfovibrio salexigens DSM 2638.</title>
        <authorList>
            <consortium name="US DOE Joint Genome Institute"/>
            <person name="Lucas S."/>
            <person name="Copeland A."/>
            <person name="Lapidus A."/>
            <person name="Glavina del Rio T."/>
            <person name="Tice H."/>
            <person name="Bruce D."/>
            <person name="Goodwin L."/>
            <person name="Pitluck S."/>
            <person name="Munk A.C."/>
            <person name="Brettin T."/>
            <person name="Detter J.C."/>
            <person name="Han C."/>
            <person name="Tapia R."/>
            <person name="Larimer F."/>
            <person name="Land M."/>
            <person name="Hauser L."/>
            <person name="Kyrpides N."/>
            <person name="Anderson I."/>
            <person name="Wall J.D."/>
            <person name="Arkin A.P."/>
            <person name="Dehal P."/>
            <person name="Chivian D."/>
            <person name="Giles B."/>
            <person name="Hazen T.C."/>
        </authorList>
    </citation>
    <scope>NUCLEOTIDE SEQUENCE [LARGE SCALE GENOMIC DNA]</scope>
    <source>
        <strain>ATCC 14822 / DSM 2638 / NCIMB 8403 / VKM B-1763</strain>
    </source>
</reference>
<sequence length="350" mass="37293">MSGNTFGQIFKVTTYGESHGPGLGGVIDGCPAGIELSEEIIQLELDRRKPGQGIASTARKEADRVKILSGVFEGRTTGTSIGFHIENTDQRSHDYSKIMNVYRPGHADRTFDAKYGFRDYRGGGRSSGRETVSRVAGGAVAQEFLRQQSISCQAYTVRIGGIDGEVKAPEKAHELPFFSADPDVIPSWEERIKEVRSQGDTLGGVVEVCIKGVPAGLGEPVFDKLDARLAYALMSVGAVKGVEIGAGCKAADALGSENNDFMDGDGFCSNNAGGVLGGISSGQDVVVRAYVKPIPSISKPQQTVDRDGNATEIKIGGRHDICAIPRIVPVLKSMAMLTVADFILLQRRMG</sequence>